<comment type="function">
    <text evidence="1">Involved in the maturation of [NiFe] hydrogenases. Required for nickel insertion into the metal center of the hydrogenase.</text>
</comment>
<comment type="similarity">
    <text evidence="1">Belongs to the HypA/HybF family.</text>
</comment>
<name>HYPA_CALS4</name>
<protein>
    <recommendedName>
        <fullName evidence="1">Hydrogenase maturation factor HypA</fullName>
    </recommendedName>
</protein>
<sequence>MHELSVTQGLVDMLVEEAEKRKVKKVTKVTVVIGELTGIESESVKFYFDILTENTVAEGAELVFKIVRAQFKCTQCGNVFERSNFTFKCPVCGGQGVLIDKRGKEFYIESIEVE</sequence>
<dbReference type="EMBL" id="AE008691">
    <property type="protein sequence ID" value="AAM23433.1"/>
    <property type="molecule type" value="Genomic_DNA"/>
</dbReference>
<dbReference type="RefSeq" id="WP_011024636.1">
    <property type="nucleotide sequence ID" value="NC_003869.1"/>
</dbReference>
<dbReference type="SMR" id="Q8RDB2"/>
<dbReference type="STRING" id="273068.TTE0129"/>
<dbReference type="KEGG" id="tte:TTE0129"/>
<dbReference type="eggNOG" id="COG0375">
    <property type="taxonomic scope" value="Bacteria"/>
</dbReference>
<dbReference type="HOGENOM" id="CLU_126929_4_0_9"/>
<dbReference type="OrthoDB" id="9800361at2"/>
<dbReference type="Proteomes" id="UP000000555">
    <property type="component" value="Chromosome"/>
</dbReference>
<dbReference type="GO" id="GO:0016151">
    <property type="term" value="F:nickel cation binding"/>
    <property type="evidence" value="ECO:0007669"/>
    <property type="project" value="UniProtKB-UniRule"/>
</dbReference>
<dbReference type="GO" id="GO:0008270">
    <property type="term" value="F:zinc ion binding"/>
    <property type="evidence" value="ECO:0007669"/>
    <property type="project" value="UniProtKB-UniRule"/>
</dbReference>
<dbReference type="GO" id="GO:0051604">
    <property type="term" value="P:protein maturation"/>
    <property type="evidence" value="ECO:0007669"/>
    <property type="project" value="InterPro"/>
</dbReference>
<dbReference type="GO" id="GO:0036211">
    <property type="term" value="P:protein modification process"/>
    <property type="evidence" value="ECO:0007669"/>
    <property type="project" value="UniProtKB-UniRule"/>
</dbReference>
<dbReference type="Gene3D" id="3.30.2320.80">
    <property type="match status" value="1"/>
</dbReference>
<dbReference type="HAMAP" id="MF_00213">
    <property type="entry name" value="HypA_HybF"/>
    <property type="match status" value="1"/>
</dbReference>
<dbReference type="InterPro" id="IPR000688">
    <property type="entry name" value="HypA/HybF"/>
</dbReference>
<dbReference type="NCBIfam" id="TIGR00100">
    <property type="entry name" value="hypA"/>
    <property type="match status" value="1"/>
</dbReference>
<dbReference type="PANTHER" id="PTHR34535">
    <property type="entry name" value="HYDROGENASE MATURATION FACTOR HYPA"/>
    <property type="match status" value="1"/>
</dbReference>
<dbReference type="PANTHER" id="PTHR34535:SF3">
    <property type="entry name" value="HYDROGENASE MATURATION FACTOR HYPA"/>
    <property type="match status" value="1"/>
</dbReference>
<dbReference type="Pfam" id="PF01155">
    <property type="entry name" value="HypA"/>
    <property type="match status" value="1"/>
</dbReference>
<dbReference type="PIRSF" id="PIRSF004761">
    <property type="entry name" value="Hydrgn_mat_HypA"/>
    <property type="match status" value="1"/>
</dbReference>
<dbReference type="SUPFAM" id="SSF57802">
    <property type="entry name" value="Rubredoxin-like"/>
    <property type="match status" value="1"/>
</dbReference>
<proteinExistence type="inferred from homology"/>
<accession>Q8RDB2</accession>
<evidence type="ECO:0000255" key="1">
    <source>
        <dbReference type="HAMAP-Rule" id="MF_00213"/>
    </source>
</evidence>
<gene>
    <name evidence="1" type="primary">hypA</name>
    <name type="synonym">hybF</name>
    <name type="ordered locus">TTE0129</name>
</gene>
<keyword id="KW-0479">Metal-binding</keyword>
<keyword id="KW-0533">Nickel</keyword>
<keyword id="KW-1185">Reference proteome</keyword>
<keyword id="KW-0862">Zinc</keyword>
<reference key="1">
    <citation type="journal article" date="2002" name="Genome Res.">
        <title>A complete sequence of the T. tengcongensis genome.</title>
        <authorList>
            <person name="Bao Q."/>
            <person name="Tian Y."/>
            <person name="Li W."/>
            <person name="Xu Z."/>
            <person name="Xuan Z."/>
            <person name="Hu S."/>
            <person name="Dong W."/>
            <person name="Yang J."/>
            <person name="Chen Y."/>
            <person name="Xue Y."/>
            <person name="Xu Y."/>
            <person name="Lai X."/>
            <person name="Huang L."/>
            <person name="Dong X."/>
            <person name="Ma Y."/>
            <person name="Ling L."/>
            <person name="Tan H."/>
            <person name="Chen R."/>
            <person name="Wang J."/>
            <person name="Yu J."/>
            <person name="Yang H."/>
        </authorList>
    </citation>
    <scope>NUCLEOTIDE SEQUENCE [LARGE SCALE GENOMIC DNA]</scope>
    <source>
        <strain>DSM 15242 / JCM 11007 / NBRC 100824 / MB4</strain>
    </source>
</reference>
<organism>
    <name type="scientific">Caldanaerobacter subterraneus subsp. tengcongensis (strain DSM 15242 / JCM 11007 / NBRC 100824 / MB4)</name>
    <name type="common">Thermoanaerobacter tengcongensis</name>
    <dbReference type="NCBI Taxonomy" id="273068"/>
    <lineage>
        <taxon>Bacteria</taxon>
        <taxon>Bacillati</taxon>
        <taxon>Bacillota</taxon>
        <taxon>Clostridia</taxon>
        <taxon>Thermoanaerobacterales</taxon>
        <taxon>Thermoanaerobacteraceae</taxon>
        <taxon>Caldanaerobacter</taxon>
    </lineage>
</organism>
<feature type="chain" id="PRO_0000129055" description="Hydrogenase maturation factor HypA">
    <location>
        <begin position="1"/>
        <end position="114"/>
    </location>
</feature>
<feature type="binding site" evidence="1">
    <location>
        <position position="2"/>
    </location>
    <ligand>
        <name>Ni(2+)</name>
        <dbReference type="ChEBI" id="CHEBI:49786"/>
    </ligand>
</feature>
<feature type="binding site" evidence="1">
    <location>
        <position position="73"/>
    </location>
    <ligand>
        <name>Zn(2+)</name>
        <dbReference type="ChEBI" id="CHEBI:29105"/>
    </ligand>
</feature>
<feature type="binding site" evidence="1">
    <location>
        <position position="76"/>
    </location>
    <ligand>
        <name>Zn(2+)</name>
        <dbReference type="ChEBI" id="CHEBI:29105"/>
    </ligand>
</feature>
<feature type="binding site" evidence="1">
    <location>
        <position position="89"/>
    </location>
    <ligand>
        <name>Zn(2+)</name>
        <dbReference type="ChEBI" id="CHEBI:29105"/>
    </ligand>
</feature>
<feature type="binding site" evidence="1">
    <location>
        <position position="92"/>
    </location>
    <ligand>
        <name>Zn(2+)</name>
        <dbReference type="ChEBI" id="CHEBI:29105"/>
    </ligand>
</feature>